<dbReference type="EMBL" id="CU329670">
    <property type="protein sequence ID" value="CAB16206.1"/>
    <property type="molecule type" value="Genomic_DNA"/>
</dbReference>
<dbReference type="PIR" id="T37544">
    <property type="entry name" value="T37544"/>
</dbReference>
<dbReference type="SMR" id="O13695"/>
<dbReference type="BioGRID" id="279465">
    <property type="interactions" value="21"/>
</dbReference>
<dbReference type="STRING" id="284812.O13695"/>
<dbReference type="iPTMnet" id="O13695"/>
<dbReference type="PaxDb" id="4896-SPAC11G7.01.1"/>
<dbReference type="EnsemblFungi" id="SPAC11G7.01.1">
    <property type="protein sequence ID" value="SPAC11G7.01.1:pep"/>
    <property type="gene ID" value="SPAC11G7.01"/>
</dbReference>
<dbReference type="KEGG" id="spo:2543029"/>
<dbReference type="PomBase" id="SPAC11G7.01"/>
<dbReference type="VEuPathDB" id="FungiDB:SPAC11G7.01"/>
<dbReference type="eggNOG" id="ENOG502S35T">
    <property type="taxonomic scope" value="Eukaryota"/>
</dbReference>
<dbReference type="HOGENOM" id="CLU_508211_0_0_1"/>
<dbReference type="InParanoid" id="O13695"/>
<dbReference type="OMA" id="FDEHNPE"/>
<dbReference type="PRO" id="PR:O13695"/>
<dbReference type="Proteomes" id="UP000002485">
    <property type="component" value="Chromosome I"/>
</dbReference>
<dbReference type="GO" id="GO:0005886">
    <property type="term" value="C:plasma membrane"/>
    <property type="evidence" value="ECO:0000269"/>
    <property type="project" value="PomBase"/>
</dbReference>
<dbReference type="GO" id="GO:1903139">
    <property type="term" value="P:positive regulation of cell integrity MAPK cascade"/>
    <property type="evidence" value="ECO:0000266"/>
    <property type="project" value="PomBase"/>
</dbReference>
<feature type="chain" id="PRO_0000116725" description="Uncharacterized serine-rich protein C11G7.01">
    <location>
        <begin position="1"/>
        <end position="536"/>
    </location>
</feature>
<feature type="transmembrane region" description="Helical" evidence="1">
    <location>
        <begin position="247"/>
        <end position="267"/>
    </location>
</feature>
<feature type="transmembrane region" description="Helical" evidence="1">
    <location>
        <begin position="351"/>
        <end position="371"/>
    </location>
</feature>
<feature type="region of interest" description="Disordered" evidence="2">
    <location>
        <begin position="1"/>
        <end position="76"/>
    </location>
</feature>
<feature type="region of interest" description="Disordered" evidence="2">
    <location>
        <begin position="204"/>
        <end position="237"/>
    </location>
</feature>
<feature type="region of interest" description="Disordered" evidence="2">
    <location>
        <begin position="287"/>
        <end position="354"/>
    </location>
</feature>
<feature type="region of interest" description="Disordered" evidence="2">
    <location>
        <begin position="373"/>
        <end position="536"/>
    </location>
</feature>
<feature type="compositionally biased region" description="Low complexity" evidence="2">
    <location>
        <begin position="7"/>
        <end position="76"/>
    </location>
</feature>
<feature type="compositionally biased region" description="Low complexity" evidence="2">
    <location>
        <begin position="204"/>
        <end position="234"/>
    </location>
</feature>
<feature type="compositionally biased region" description="Polar residues" evidence="2">
    <location>
        <begin position="290"/>
        <end position="326"/>
    </location>
</feature>
<feature type="compositionally biased region" description="Low complexity" evidence="2">
    <location>
        <begin position="327"/>
        <end position="350"/>
    </location>
</feature>
<feature type="compositionally biased region" description="Polar residues" evidence="2">
    <location>
        <begin position="403"/>
        <end position="424"/>
    </location>
</feature>
<feature type="compositionally biased region" description="Low complexity" evidence="2">
    <location>
        <begin position="430"/>
        <end position="454"/>
    </location>
</feature>
<feature type="compositionally biased region" description="Polar residues" evidence="2">
    <location>
        <begin position="480"/>
        <end position="509"/>
    </location>
</feature>
<feature type="compositionally biased region" description="Low complexity" evidence="2">
    <location>
        <begin position="517"/>
        <end position="527"/>
    </location>
</feature>
<keyword id="KW-0472">Membrane</keyword>
<keyword id="KW-1185">Reference proteome</keyword>
<keyword id="KW-0812">Transmembrane</keyword>
<keyword id="KW-1133">Transmembrane helix</keyword>
<proteinExistence type="predicted"/>
<evidence type="ECO:0000255" key="1"/>
<evidence type="ECO:0000256" key="2">
    <source>
        <dbReference type="SAM" id="MobiDB-lite"/>
    </source>
</evidence>
<evidence type="ECO:0000305" key="3"/>
<reference key="1">
    <citation type="journal article" date="2002" name="Nature">
        <title>The genome sequence of Schizosaccharomyces pombe.</title>
        <authorList>
            <person name="Wood V."/>
            <person name="Gwilliam R."/>
            <person name="Rajandream M.A."/>
            <person name="Lyne M.H."/>
            <person name="Lyne R."/>
            <person name="Stewart A."/>
            <person name="Sgouros J.G."/>
            <person name="Peat N."/>
            <person name="Hayles J."/>
            <person name="Baker S.G."/>
            <person name="Basham D."/>
            <person name="Bowman S."/>
            <person name="Brooks K."/>
            <person name="Brown D."/>
            <person name="Brown S."/>
            <person name="Chillingworth T."/>
            <person name="Churcher C.M."/>
            <person name="Collins M."/>
            <person name="Connor R."/>
            <person name="Cronin A."/>
            <person name="Davis P."/>
            <person name="Feltwell T."/>
            <person name="Fraser A."/>
            <person name="Gentles S."/>
            <person name="Goble A."/>
            <person name="Hamlin N."/>
            <person name="Harris D.E."/>
            <person name="Hidalgo J."/>
            <person name="Hodgson G."/>
            <person name="Holroyd S."/>
            <person name="Hornsby T."/>
            <person name="Howarth S."/>
            <person name="Huckle E.J."/>
            <person name="Hunt S."/>
            <person name="Jagels K."/>
            <person name="James K.D."/>
            <person name="Jones L."/>
            <person name="Jones M."/>
            <person name="Leather S."/>
            <person name="McDonald S."/>
            <person name="McLean J."/>
            <person name="Mooney P."/>
            <person name="Moule S."/>
            <person name="Mungall K.L."/>
            <person name="Murphy L.D."/>
            <person name="Niblett D."/>
            <person name="Odell C."/>
            <person name="Oliver K."/>
            <person name="O'Neil S."/>
            <person name="Pearson D."/>
            <person name="Quail M.A."/>
            <person name="Rabbinowitsch E."/>
            <person name="Rutherford K.M."/>
            <person name="Rutter S."/>
            <person name="Saunders D."/>
            <person name="Seeger K."/>
            <person name="Sharp S."/>
            <person name="Skelton J."/>
            <person name="Simmonds M.N."/>
            <person name="Squares R."/>
            <person name="Squares S."/>
            <person name="Stevens K."/>
            <person name="Taylor K."/>
            <person name="Taylor R.G."/>
            <person name="Tivey A."/>
            <person name="Walsh S.V."/>
            <person name="Warren T."/>
            <person name="Whitehead S."/>
            <person name="Woodward J.R."/>
            <person name="Volckaert G."/>
            <person name="Aert R."/>
            <person name="Robben J."/>
            <person name="Grymonprez B."/>
            <person name="Weltjens I."/>
            <person name="Vanstreels E."/>
            <person name="Rieger M."/>
            <person name="Schaefer M."/>
            <person name="Mueller-Auer S."/>
            <person name="Gabel C."/>
            <person name="Fuchs M."/>
            <person name="Duesterhoeft A."/>
            <person name="Fritzc C."/>
            <person name="Holzer E."/>
            <person name="Moestl D."/>
            <person name="Hilbert H."/>
            <person name="Borzym K."/>
            <person name="Langer I."/>
            <person name="Beck A."/>
            <person name="Lehrach H."/>
            <person name="Reinhardt R."/>
            <person name="Pohl T.M."/>
            <person name="Eger P."/>
            <person name="Zimmermann W."/>
            <person name="Wedler H."/>
            <person name="Wambutt R."/>
            <person name="Purnelle B."/>
            <person name="Goffeau A."/>
            <person name="Cadieu E."/>
            <person name="Dreano S."/>
            <person name="Gloux S."/>
            <person name="Lelaure V."/>
            <person name="Mottier S."/>
            <person name="Galibert F."/>
            <person name="Aves S.J."/>
            <person name="Xiang Z."/>
            <person name="Hunt C."/>
            <person name="Moore K."/>
            <person name="Hurst S.M."/>
            <person name="Lucas M."/>
            <person name="Rochet M."/>
            <person name="Gaillardin C."/>
            <person name="Tallada V.A."/>
            <person name="Garzon A."/>
            <person name="Thode G."/>
            <person name="Daga R.R."/>
            <person name="Cruzado L."/>
            <person name="Jimenez J."/>
            <person name="Sanchez M."/>
            <person name="del Rey F."/>
            <person name="Benito J."/>
            <person name="Dominguez A."/>
            <person name="Revuelta J.L."/>
            <person name="Moreno S."/>
            <person name="Armstrong J."/>
            <person name="Forsburg S.L."/>
            <person name="Cerutti L."/>
            <person name="Lowe T."/>
            <person name="McCombie W.R."/>
            <person name="Paulsen I."/>
            <person name="Potashkin J."/>
            <person name="Shpakovski G.V."/>
            <person name="Ussery D."/>
            <person name="Barrell B.G."/>
            <person name="Nurse P."/>
        </authorList>
    </citation>
    <scope>NUCLEOTIDE SEQUENCE [LARGE SCALE GENOMIC DNA]</scope>
    <source>
        <strain>972 / ATCC 24843</strain>
    </source>
</reference>
<sequence length="536" mass="52993">MSFTNNTSSVDTSLSSSASSSIPASSSSAAASTSLSSSSVIPSSSSSMLSSSSATAISSSSSSSPLSSSSFTSPASSSFITSLVSSSSQQSSSSSASLTSSSSATLTSSSSASPTSSSSSHALSSSSSSLVASSSSSGMSSSSLSHSSSVPSSSSSYHSSSMTTSGLSSSASIVSSTYRDGPSIITLVSTSYVSEVVTPTTTNNWNSSSSFTSSTSSTPISSSYSSSGTLPSKSNKSSNHVGVVVGCSVAIPVGVVLILIGLGIFLWKRHQRSKRIKAERMQEVEEYGFNPNQPSNFRSPNRAPSTNNRYRGWNGSPTPAAGNNTNGRPVAPRPSAGAGGANPPAASQPGLLGGSSNSAGPIAAATAAGVGADASDAANTGGSFTRPQGARMVRPIGNPPDLSASNEAEATMPPSNGSNFSEGLSASPFESGPAVGAAGAAAEAAEHSGSGSDSYPEGPLATIPESDSESMASDLAGESSYGSRAALSSRSQSNLLSPTSTGASNQPNYSPFADNPSSSNVSIPRSSSEARRLNLF</sequence>
<organism>
    <name type="scientific">Schizosaccharomyces pombe (strain 972 / ATCC 24843)</name>
    <name type="common">Fission yeast</name>
    <dbReference type="NCBI Taxonomy" id="284812"/>
    <lineage>
        <taxon>Eukaryota</taxon>
        <taxon>Fungi</taxon>
        <taxon>Dikarya</taxon>
        <taxon>Ascomycota</taxon>
        <taxon>Taphrinomycotina</taxon>
        <taxon>Schizosaccharomycetes</taxon>
        <taxon>Schizosaccharomycetales</taxon>
        <taxon>Schizosaccharomycetaceae</taxon>
        <taxon>Schizosaccharomyces</taxon>
    </lineage>
</organism>
<gene>
    <name type="ORF">SPAC11G7.01</name>
</gene>
<name>YEN1_SCHPO</name>
<protein>
    <recommendedName>
        <fullName>Uncharacterized serine-rich protein C11G7.01</fullName>
    </recommendedName>
</protein>
<comment type="subcellular location">
    <subcellularLocation>
        <location evidence="3">Membrane</location>
        <topology evidence="3">Multi-pass membrane protein</topology>
    </subcellularLocation>
</comment>
<accession>O13695</accession>